<evidence type="ECO:0000255" key="1">
    <source>
        <dbReference type="HAMAP-Rule" id="MF_01174"/>
    </source>
</evidence>
<organism>
    <name type="scientific">Burkholderia pseudomallei (strain K96243)</name>
    <dbReference type="NCBI Taxonomy" id="272560"/>
    <lineage>
        <taxon>Bacteria</taxon>
        <taxon>Pseudomonadati</taxon>
        <taxon>Pseudomonadota</taxon>
        <taxon>Betaproteobacteria</taxon>
        <taxon>Burkholderiales</taxon>
        <taxon>Burkholderiaceae</taxon>
        <taxon>Burkholderia</taxon>
        <taxon>pseudomallei group</taxon>
    </lineage>
</organism>
<sequence length="487" mass="51839">MTELFIDGAWRDGAGPVFASRNPGTGEPVWEGAGASADDVERAVASARRAFAAWSALDLDARCAIVKRFAALLVERKEALATMIGRETGKPLWEARTEVASMAAKVDVSIAAYHERTGERRSPTADGVAVLRHRPHGVVAVFGPYNFPGHLPNGHIVPALIAGNTVVFKPSELAPGVARATVEIWRDAGLPAGVLNLVQGEKDTGVALANHRQIDGLFFTGSSDTGTLLHRQFGGRPEIVLALEMGGNNPLVVADVEDIDAAVHHAIQSAFLSAGQRCTCARRILVPRGAFGDRFLERFADVASRITADVYDADPQPFMGAVISARAASRLVAAQAKLLELGAAPIIEMRQRDPALGFVNASILDVTPVRELPDEEHFGPLAQIVRYTDLDDAIARANDTAFGLSAGLLADDETVWNTFRRAIRAGIVNWNRPTNGASSAAPFGGAGRSGNHRPSAYYAADYCAYPMASVESAQLQMPANLSPGLHF</sequence>
<comment type="function">
    <text evidence="1">Catalyzes the NAD-dependent reduction of succinylglutamate semialdehyde into succinylglutamate.</text>
</comment>
<comment type="catalytic activity">
    <reaction evidence="1">
        <text>N-succinyl-L-glutamate 5-semialdehyde + NAD(+) + H2O = N-succinyl-L-glutamate + NADH + 2 H(+)</text>
        <dbReference type="Rhea" id="RHEA:10812"/>
        <dbReference type="ChEBI" id="CHEBI:15377"/>
        <dbReference type="ChEBI" id="CHEBI:15378"/>
        <dbReference type="ChEBI" id="CHEBI:57540"/>
        <dbReference type="ChEBI" id="CHEBI:57945"/>
        <dbReference type="ChEBI" id="CHEBI:58520"/>
        <dbReference type="ChEBI" id="CHEBI:58763"/>
        <dbReference type="EC" id="1.2.1.71"/>
    </reaction>
</comment>
<comment type="pathway">
    <text evidence="1">Amino-acid degradation; L-arginine degradation via AST pathway; L-glutamate and succinate from L-arginine: step 4/5.</text>
</comment>
<comment type="similarity">
    <text evidence="1">Belongs to the aldehyde dehydrogenase family. AstD subfamily.</text>
</comment>
<accession>Q63SD7</accession>
<dbReference type="EC" id="1.2.1.71" evidence="1"/>
<dbReference type="EMBL" id="BX571965">
    <property type="protein sequence ID" value="CAH36389.1"/>
    <property type="molecule type" value="Genomic_DNA"/>
</dbReference>
<dbReference type="RefSeq" id="WP_004527437.1">
    <property type="nucleotide sequence ID" value="NZ_CP009538.1"/>
</dbReference>
<dbReference type="RefSeq" id="YP_108979.1">
    <property type="nucleotide sequence ID" value="NC_006350.1"/>
</dbReference>
<dbReference type="SMR" id="Q63SD7"/>
<dbReference type="STRING" id="272560.BPSL2387"/>
<dbReference type="KEGG" id="bps:BPSL2387"/>
<dbReference type="PATRIC" id="fig|272560.51.peg.3015"/>
<dbReference type="eggNOG" id="COG1012">
    <property type="taxonomic scope" value="Bacteria"/>
</dbReference>
<dbReference type="UniPathway" id="UPA00185">
    <property type="reaction ID" value="UER00282"/>
</dbReference>
<dbReference type="Proteomes" id="UP000000605">
    <property type="component" value="Chromosome 1"/>
</dbReference>
<dbReference type="GO" id="GO:0043824">
    <property type="term" value="F:succinylglutamate-semialdehyde dehydrogenase activity"/>
    <property type="evidence" value="ECO:0007669"/>
    <property type="project" value="UniProtKB-EC"/>
</dbReference>
<dbReference type="GO" id="GO:0019544">
    <property type="term" value="P:arginine catabolic process to glutamate"/>
    <property type="evidence" value="ECO:0007669"/>
    <property type="project" value="UniProtKB-UniRule"/>
</dbReference>
<dbReference type="GO" id="GO:0019545">
    <property type="term" value="P:arginine catabolic process to succinate"/>
    <property type="evidence" value="ECO:0007669"/>
    <property type="project" value="UniProtKB-UniRule"/>
</dbReference>
<dbReference type="CDD" id="cd07095">
    <property type="entry name" value="ALDH_SGSD_AstD"/>
    <property type="match status" value="1"/>
</dbReference>
<dbReference type="FunFam" id="3.40.605.10:FF:000010">
    <property type="entry name" value="N-succinylglutamate 5-semialdehyde dehydrogenase"/>
    <property type="match status" value="1"/>
</dbReference>
<dbReference type="Gene3D" id="3.40.605.10">
    <property type="entry name" value="Aldehyde Dehydrogenase, Chain A, domain 1"/>
    <property type="match status" value="1"/>
</dbReference>
<dbReference type="Gene3D" id="3.40.309.10">
    <property type="entry name" value="Aldehyde Dehydrogenase, Chain A, domain 2"/>
    <property type="match status" value="1"/>
</dbReference>
<dbReference type="HAMAP" id="MF_01174">
    <property type="entry name" value="Aldedh_AstD"/>
    <property type="match status" value="1"/>
</dbReference>
<dbReference type="InterPro" id="IPR016161">
    <property type="entry name" value="Ald_DH/histidinol_DH"/>
</dbReference>
<dbReference type="InterPro" id="IPR016163">
    <property type="entry name" value="Ald_DH_C"/>
</dbReference>
<dbReference type="InterPro" id="IPR016160">
    <property type="entry name" value="Ald_DH_CS_CYS"/>
</dbReference>
<dbReference type="InterPro" id="IPR029510">
    <property type="entry name" value="Ald_DH_CS_GLU"/>
</dbReference>
<dbReference type="InterPro" id="IPR016162">
    <property type="entry name" value="Ald_DH_N"/>
</dbReference>
<dbReference type="InterPro" id="IPR015590">
    <property type="entry name" value="Aldehyde_DH_dom"/>
</dbReference>
<dbReference type="InterPro" id="IPR017649">
    <property type="entry name" value="SuccinylGlu_semiald_DH_AstD"/>
</dbReference>
<dbReference type="NCBIfam" id="TIGR03240">
    <property type="entry name" value="arg_catab_astD"/>
    <property type="match status" value="1"/>
</dbReference>
<dbReference type="NCBIfam" id="NF006992">
    <property type="entry name" value="PRK09457.1"/>
    <property type="match status" value="1"/>
</dbReference>
<dbReference type="PANTHER" id="PTHR11699">
    <property type="entry name" value="ALDEHYDE DEHYDROGENASE-RELATED"/>
    <property type="match status" value="1"/>
</dbReference>
<dbReference type="Pfam" id="PF00171">
    <property type="entry name" value="Aldedh"/>
    <property type="match status" value="1"/>
</dbReference>
<dbReference type="SUPFAM" id="SSF53720">
    <property type="entry name" value="ALDH-like"/>
    <property type="match status" value="1"/>
</dbReference>
<dbReference type="PROSITE" id="PS00070">
    <property type="entry name" value="ALDEHYDE_DEHYDR_CYS"/>
    <property type="match status" value="1"/>
</dbReference>
<dbReference type="PROSITE" id="PS00687">
    <property type="entry name" value="ALDEHYDE_DEHYDR_GLU"/>
    <property type="match status" value="1"/>
</dbReference>
<feature type="chain" id="PRO_0000262389" description="N-succinylglutamate 5-semialdehyde dehydrogenase">
    <location>
        <begin position="1"/>
        <end position="487"/>
    </location>
</feature>
<feature type="active site" evidence="1">
    <location>
        <position position="244"/>
    </location>
</feature>
<feature type="active site" evidence="1">
    <location>
        <position position="278"/>
    </location>
</feature>
<feature type="binding site" evidence="1">
    <location>
        <begin position="221"/>
        <end position="226"/>
    </location>
    <ligand>
        <name>NAD(+)</name>
        <dbReference type="ChEBI" id="CHEBI:57540"/>
    </ligand>
</feature>
<proteinExistence type="inferred from homology"/>
<name>ASTD_BURPS</name>
<protein>
    <recommendedName>
        <fullName evidence="1">N-succinylglutamate 5-semialdehyde dehydrogenase</fullName>
        <ecNumber evidence="1">1.2.1.71</ecNumber>
    </recommendedName>
    <alternativeName>
        <fullName evidence="1">Succinylglutamic semialdehyde dehydrogenase</fullName>
        <shortName evidence="1">SGSD</shortName>
    </alternativeName>
</protein>
<reference key="1">
    <citation type="journal article" date="2004" name="Proc. Natl. Acad. Sci. U.S.A.">
        <title>Genomic plasticity of the causative agent of melioidosis, Burkholderia pseudomallei.</title>
        <authorList>
            <person name="Holden M.T.G."/>
            <person name="Titball R.W."/>
            <person name="Peacock S.J."/>
            <person name="Cerdeno-Tarraga A.-M."/>
            <person name="Atkins T."/>
            <person name="Crossman L.C."/>
            <person name="Pitt T."/>
            <person name="Churcher C."/>
            <person name="Mungall K.L."/>
            <person name="Bentley S.D."/>
            <person name="Sebaihia M."/>
            <person name="Thomson N.R."/>
            <person name="Bason N."/>
            <person name="Beacham I.R."/>
            <person name="Brooks K."/>
            <person name="Brown K.A."/>
            <person name="Brown N.F."/>
            <person name="Challis G.L."/>
            <person name="Cherevach I."/>
            <person name="Chillingworth T."/>
            <person name="Cronin A."/>
            <person name="Crossett B."/>
            <person name="Davis P."/>
            <person name="DeShazer D."/>
            <person name="Feltwell T."/>
            <person name="Fraser A."/>
            <person name="Hance Z."/>
            <person name="Hauser H."/>
            <person name="Holroyd S."/>
            <person name="Jagels K."/>
            <person name="Keith K.E."/>
            <person name="Maddison M."/>
            <person name="Moule S."/>
            <person name="Price C."/>
            <person name="Quail M.A."/>
            <person name="Rabbinowitsch E."/>
            <person name="Rutherford K."/>
            <person name="Sanders M."/>
            <person name="Simmonds M."/>
            <person name="Songsivilai S."/>
            <person name="Stevens K."/>
            <person name="Tumapa S."/>
            <person name="Vesaratchavest M."/>
            <person name="Whitehead S."/>
            <person name="Yeats C."/>
            <person name="Barrell B.G."/>
            <person name="Oyston P.C.F."/>
            <person name="Parkhill J."/>
        </authorList>
    </citation>
    <scope>NUCLEOTIDE SEQUENCE [LARGE SCALE GENOMIC DNA]</scope>
    <source>
        <strain>K96243</strain>
    </source>
</reference>
<keyword id="KW-0056">Arginine metabolism</keyword>
<keyword id="KW-0520">NAD</keyword>
<keyword id="KW-0560">Oxidoreductase</keyword>
<keyword id="KW-1185">Reference proteome</keyword>
<gene>
    <name evidence="1" type="primary">astD</name>
    <name type="ordered locus">BPSL2387</name>
</gene>